<gene>
    <name evidence="1" type="primary">fusA</name>
    <name type="ordered locus">AFE_0324</name>
</gene>
<reference key="1">
    <citation type="journal article" date="2008" name="BMC Genomics">
        <title>Acidithiobacillus ferrooxidans metabolism: from genome sequence to industrial applications.</title>
        <authorList>
            <person name="Valdes J."/>
            <person name="Pedroso I."/>
            <person name="Quatrini R."/>
            <person name="Dodson R.J."/>
            <person name="Tettelin H."/>
            <person name="Blake R. II"/>
            <person name="Eisen J.A."/>
            <person name="Holmes D.S."/>
        </authorList>
    </citation>
    <scope>NUCLEOTIDE SEQUENCE [LARGE SCALE GENOMIC DNA]</scope>
    <source>
        <strain>ATCC 23270 / DSM 14882 / CIP 104768 / NCIMB 8455</strain>
    </source>
</reference>
<dbReference type="EMBL" id="CP001219">
    <property type="protein sequence ID" value="ACK80906.1"/>
    <property type="molecule type" value="Genomic_DNA"/>
</dbReference>
<dbReference type="RefSeq" id="WP_012536085.1">
    <property type="nucleotide sequence ID" value="NC_011761.1"/>
</dbReference>
<dbReference type="SMR" id="B7J464"/>
<dbReference type="STRING" id="243159.AFE_0324"/>
<dbReference type="PaxDb" id="243159-AFE_0324"/>
<dbReference type="GeneID" id="65279703"/>
<dbReference type="KEGG" id="afr:AFE_0324"/>
<dbReference type="eggNOG" id="COG0480">
    <property type="taxonomic scope" value="Bacteria"/>
</dbReference>
<dbReference type="HOGENOM" id="CLU_002794_4_1_6"/>
<dbReference type="Proteomes" id="UP000001362">
    <property type="component" value="Chromosome"/>
</dbReference>
<dbReference type="GO" id="GO:0005737">
    <property type="term" value="C:cytoplasm"/>
    <property type="evidence" value="ECO:0007669"/>
    <property type="project" value="UniProtKB-SubCell"/>
</dbReference>
<dbReference type="GO" id="GO:0005525">
    <property type="term" value="F:GTP binding"/>
    <property type="evidence" value="ECO:0007669"/>
    <property type="project" value="UniProtKB-UniRule"/>
</dbReference>
<dbReference type="GO" id="GO:0003924">
    <property type="term" value="F:GTPase activity"/>
    <property type="evidence" value="ECO:0007669"/>
    <property type="project" value="InterPro"/>
</dbReference>
<dbReference type="GO" id="GO:0003746">
    <property type="term" value="F:translation elongation factor activity"/>
    <property type="evidence" value="ECO:0007669"/>
    <property type="project" value="UniProtKB-UniRule"/>
</dbReference>
<dbReference type="GO" id="GO:0032790">
    <property type="term" value="P:ribosome disassembly"/>
    <property type="evidence" value="ECO:0007669"/>
    <property type="project" value="TreeGrafter"/>
</dbReference>
<dbReference type="CDD" id="cd01886">
    <property type="entry name" value="EF-G"/>
    <property type="match status" value="1"/>
</dbReference>
<dbReference type="CDD" id="cd16262">
    <property type="entry name" value="EFG_III"/>
    <property type="match status" value="1"/>
</dbReference>
<dbReference type="CDD" id="cd01434">
    <property type="entry name" value="EFG_mtEFG1_IV"/>
    <property type="match status" value="1"/>
</dbReference>
<dbReference type="CDD" id="cd03713">
    <property type="entry name" value="EFG_mtEFG_C"/>
    <property type="match status" value="1"/>
</dbReference>
<dbReference type="CDD" id="cd04088">
    <property type="entry name" value="EFG_mtEFG_II"/>
    <property type="match status" value="1"/>
</dbReference>
<dbReference type="FunFam" id="2.40.30.10:FF:000006">
    <property type="entry name" value="Elongation factor G"/>
    <property type="match status" value="1"/>
</dbReference>
<dbReference type="FunFam" id="3.30.230.10:FF:000003">
    <property type="entry name" value="Elongation factor G"/>
    <property type="match status" value="1"/>
</dbReference>
<dbReference type="FunFam" id="3.30.70.240:FF:000001">
    <property type="entry name" value="Elongation factor G"/>
    <property type="match status" value="1"/>
</dbReference>
<dbReference type="FunFam" id="3.30.70.870:FF:000001">
    <property type="entry name" value="Elongation factor G"/>
    <property type="match status" value="1"/>
</dbReference>
<dbReference type="FunFam" id="3.40.50.300:FF:000029">
    <property type="entry name" value="Elongation factor G"/>
    <property type="match status" value="1"/>
</dbReference>
<dbReference type="Gene3D" id="3.30.230.10">
    <property type="match status" value="1"/>
</dbReference>
<dbReference type="Gene3D" id="3.30.70.240">
    <property type="match status" value="1"/>
</dbReference>
<dbReference type="Gene3D" id="3.30.70.870">
    <property type="entry name" value="Elongation Factor G (Translational Gtpase), domain 3"/>
    <property type="match status" value="1"/>
</dbReference>
<dbReference type="Gene3D" id="3.40.50.300">
    <property type="entry name" value="P-loop containing nucleotide triphosphate hydrolases"/>
    <property type="match status" value="1"/>
</dbReference>
<dbReference type="Gene3D" id="2.40.30.10">
    <property type="entry name" value="Translation factors"/>
    <property type="match status" value="1"/>
</dbReference>
<dbReference type="HAMAP" id="MF_00054_B">
    <property type="entry name" value="EF_G_EF_2_B"/>
    <property type="match status" value="1"/>
</dbReference>
<dbReference type="InterPro" id="IPR053905">
    <property type="entry name" value="EF-G-like_DII"/>
</dbReference>
<dbReference type="InterPro" id="IPR041095">
    <property type="entry name" value="EFG_II"/>
</dbReference>
<dbReference type="InterPro" id="IPR009022">
    <property type="entry name" value="EFG_III"/>
</dbReference>
<dbReference type="InterPro" id="IPR035647">
    <property type="entry name" value="EFG_III/V"/>
</dbReference>
<dbReference type="InterPro" id="IPR047872">
    <property type="entry name" value="EFG_IV"/>
</dbReference>
<dbReference type="InterPro" id="IPR035649">
    <property type="entry name" value="EFG_V"/>
</dbReference>
<dbReference type="InterPro" id="IPR000640">
    <property type="entry name" value="EFG_V-like"/>
</dbReference>
<dbReference type="InterPro" id="IPR031157">
    <property type="entry name" value="G_TR_CS"/>
</dbReference>
<dbReference type="InterPro" id="IPR027417">
    <property type="entry name" value="P-loop_NTPase"/>
</dbReference>
<dbReference type="InterPro" id="IPR020568">
    <property type="entry name" value="Ribosomal_Su5_D2-typ_SF"/>
</dbReference>
<dbReference type="InterPro" id="IPR014721">
    <property type="entry name" value="Ribsml_uS5_D2-typ_fold_subgr"/>
</dbReference>
<dbReference type="InterPro" id="IPR005225">
    <property type="entry name" value="Small_GTP-bd"/>
</dbReference>
<dbReference type="InterPro" id="IPR000795">
    <property type="entry name" value="T_Tr_GTP-bd_dom"/>
</dbReference>
<dbReference type="InterPro" id="IPR009000">
    <property type="entry name" value="Transl_B-barrel_sf"/>
</dbReference>
<dbReference type="InterPro" id="IPR004540">
    <property type="entry name" value="Transl_elong_EFG/EF2"/>
</dbReference>
<dbReference type="InterPro" id="IPR005517">
    <property type="entry name" value="Transl_elong_EFG/EF2_IV"/>
</dbReference>
<dbReference type="NCBIfam" id="TIGR00484">
    <property type="entry name" value="EF-G"/>
    <property type="match status" value="1"/>
</dbReference>
<dbReference type="NCBIfam" id="NF009381">
    <property type="entry name" value="PRK12740.1-5"/>
    <property type="match status" value="1"/>
</dbReference>
<dbReference type="NCBIfam" id="TIGR00231">
    <property type="entry name" value="small_GTP"/>
    <property type="match status" value="1"/>
</dbReference>
<dbReference type="PANTHER" id="PTHR43261:SF1">
    <property type="entry name" value="RIBOSOME-RELEASING FACTOR 2, MITOCHONDRIAL"/>
    <property type="match status" value="1"/>
</dbReference>
<dbReference type="PANTHER" id="PTHR43261">
    <property type="entry name" value="TRANSLATION ELONGATION FACTOR G-RELATED"/>
    <property type="match status" value="1"/>
</dbReference>
<dbReference type="Pfam" id="PF22042">
    <property type="entry name" value="EF-G_D2"/>
    <property type="match status" value="1"/>
</dbReference>
<dbReference type="Pfam" id="PF00679">
    <property type="entry name" value="EFG_C"/>
    <property type="match status" value="1"/>
</dbReference>
<dbReference type="Pfam" id="PF14492">
    <property type="entry name" value="EFG_III"/>
    <property type="match status" value="1"/>
</dbReference>
<dbReference type="Pfam" id="PF03764">
    <property type="entry name" value="EFG_IV"/>
    <property type="match status" value="1"/>
</dbReference>
<dbReference type="Pfam" id="PF00009">
    <property type="entry name" value="GTP_EFTU"/>
    <property type="match status" value="1"/>
</dbReference>
<dbReference type="PRINTS" id="PR00315">
    <property type="entry name" value="ELONGATNFCT"/>
</dbReference>
<dbReference type="SMART" id="SM00838">
    <property type="entry name" value="EFG_C"/>
    <property type="match status" value="1"/>
</dbReference>
<dbReference type="SMART" id="SM00889">
    <property type="entry name" value="EFG_IV"/>
    <property type="match status" value="1"/>
</dbReference>
<dbReference type="SUPFAM" id="SSF54980">
    <property type="entry name" value="EF-G C-terminal domain-like"/>
    <property type="match status" value="2"/>
</dbReference>
<dbReference type="SUPFAM" id="SSF52540">
    <property type="entry name" value="P-loop containing nucleoside triphosphate hydrolases"/>
    <property type="match status" value="1"/>
</dbReference>
<dbReference type="SUPFAM" id="SSF54211">
    <property type="entry name" value="Ribosomal protein S5 domain 2-like"/>
    <property type="match status" value="1"/>
</dbReference>
<dbReference type="SUPFAM" id="SSF50447">
    <property type="entry name" value="Translation proteins"/>
    <property type="match status" value="1"/>
</dbReference>
<dbReference type="PROSITE" id="PS00301">
    <property type="entry name" value="G_TR_1"/>
    <property type="match status" value="1"/>
</dbReference>
<dbReference type="PROSITE" id="PS51722">
    <property type="entry name" value="G_TR_2"/>
    <property type="match status" value="1"/>
</dbReference>
<accession>B7J464</accession>
<protein>
    <recommendedName>
        <fullName evidence="1">Elongation factor G</fullName>
        <shortName evidence="1">EF-G</shortName>
    </recommendedName>
</protein>
<organism>
    <name type="scientific">Acidithiobacillus ferrooxidans (strain ATCC 23270 / DSM 14882 / CIP 104768 / NCIMB 8455)</name>
    <name type="common">Ferrobacillus ferrooxidans (strain ATCC 23270)</name>
    <dbReference type="NCBI Taxonomy" id="243159"/>
    <lineage>
        <taxon>Bacteria</taxon>
        <taxon>Pseudomonadati</taxon>
        <taxon>Pseudomonadota</taxon>
        <taxon>Acidithiobacillia</taxon>
        <taxon>Acidithiobacillales</taxon>
        <taxon>Acidithiobacillaceae</taxon>
        <taxon>Acidithiobacillus</taxon>
    </lineage>
</organism>
<sequence length="699" mass="76555">MARTTPIERYRNIGIMAHIDAGKTTTTERILFYTGVSHKIGEVHEGTAVMDWMAQEQERGITITSAATTCFWKGMDGQRAEHRINIIDTPGHVDFTIEVERSLRVLDGAMAVFCAVGGVQPQSETVWRQANKYKVPRIAFVNKMDRQGANFKRVVDQIATKLRGNPVPVQLPIGEEDHFSGVIDLMKMKSINWDDALQGTRFTEEDIPPALQADAEAARHFMVEAIADADEDVMMKYLEGEEISIAELQAALRKATISGAVVPVLCGSAFKNKGVQAALDAVLDYLPSPVDIKPVEGTNPDNGEEIVRFADDSEPFSALAFKIATDPFVGQLTFFRVYSGVLTAGSTVLNPGRNQKERIGRVLQMHANERHEIKEVLAGDIAAAVGLKTAYTGDTLCDLNKPIALEQMEFPEPVIHVAVEPKTKADQEKMGIALGKLAQEDPSFRVRTDQESGQTIISGMGELHLEIIVDRMKREFGVEATVGAPQVAYRETIRKTVESEGKFVRQSGGRGQYGHVWLRLEPLEPGSGFVFENGVVGGTVPKEFINPTEKGVEEALENGIIAGFPVVDVKVTIFDGSYHDVDSSEAAFKIAGSMGFKAGAAKANPVLLEPIFAVEVVTPEEYMGDIIGDINSRRGMMQGMEDEAGAKLIRCEVPLAEMFGYATTVRSLSQGRATYTMQFEKYMEVPGHVAEAIVKKSQR</sequence>
<name>EFG_ACIF2</name>
<proteinExistence type="inferred from homology"/>
<evidence type="ECO:0000255" key="1">
    <source>
        <dbReference type="HAMAP-Rule" id="MF_00054"/>
    </source>
</evidence>
<comment type="function">
    <text evidence="1">Catalyzes the GTP-dependent ribosomal translocation step during translation elongation. During this step, the ribosome changes from the pre-translocational (PRE) to the post-translocational (POST) state as the newly formed A-site-bound peptidyl-tRNA and P-site-bound deacylated tRNA move to the P and E sites, respectively. Catalyzes the coordinated movement of the two tRNA molecules, the mRNA and conformational changes in the ribosome.</text>
</comment>
<comment type="subcellular location">
    <subcellularLocation>
        <location evidence="1">Cytoplasm</location>
    </subcellularLocation>
</comment>
<comment type="similarity">
    <text evidence="1">Belongs to the TRAFAC class translation factor GTPase superfamily. Classic translation factor GTPase family. EF-G/EF-2 subfamily.</text>
</comment>
<keyword id="KW-0963">Cytoplasm</keyword>
<keyword id="KW-0251">Elongation factor</keyword>
<keyword id="KW-0342">GTP-binding</keyword>
<keyword id="KW-0547">Nucleotide-binding</keyword>
<keyword id="KW-0648">Protein biosynthesis</keyword>
<keyword id="KW-1185">Reference proteome</keyword>
<feature type="chain" id="PRO_1000201422" description="Elongation factor G">
    <location>
        <begin position="1"/>
        <end position="699"/>
    </location>
</feature>
<feature type="domain" description="tr-type G">
    <location>
        <begin position="8"/>
        <end position="290"/>
    </location>
</feature>
<feature type="binding site" evidence="1">
    <location>
        <begin position="17"/>
        <end position="24"/>
    </location>
    <ligand>
        <name>GTP</name>
        <dbReference type="ChEBI" id="CHEBI:37565"/>
    </ligand>
</feature>
<feature type="binding site" evidence="1">
    <location>
        <begin position="88"/>
        <end position="92"/>
    </location>
    <ligand>
        <name>GTP</name>
        <dbReference type="ChEBI" id="CHEBI:37565"/>
    </ligand>
</feature>
<feature type="binding site" evidence="1">
    <location>
        <begin position="142"/>
        <end position="145"/>
    </location>
    <ligand>
        <name>GTP</name>
        <dbReference type="ChEBI" id="CHEBI:37565"/>
    </ligand>
</feature>